<name>HEM6_RICFE</name>
<gene>
    <name evidence="1" type="primary">hemF</name>
    <name type="ordered locus">RF_1396</name>
</gene>
<evidence type="ECO:0000255" key="1">
    <source>
        <dbReference type="HAMAP-Rule" id="MF_00333"/>
    </source>
</evidence>
<sequence length="279" mass="32092">MKIENKEIASNWFTDLRDLLCKEFEKIEEEYAQTKGLKPAKFVRTSWQRNGGGGGIMSLMKGEVFEKVGVNISTVFGEFSPEFRSEIPGAELDGKFFATGISLVAHLKSPLIPAMHFNTRYIETSKSWFGGGGDLTPFYPKENETAKFHAAFKEACDKYDSSYYPKFKKQCDEYFYLKHRKEPRGVGGIFYDYLNSGNFEQDFAFTQDVGRALLSVYPEIVRSKLFLPWTTEQKEYQLIRRGRYVEFNLLYDRGTKFGLMTDGNVEAILMSLPPEVKFN</sequence>
<protein>
    <recommendedName>
        <fullName evidence="1">Oxygen-dependent coproporphyrinogen-III oxidase</fullName>
        <shortName evidence="1">CPO</shortName>
        <shortName evidence="1">Coprogen oxidase</shortName>
        <shortName evidence="1">Coproporphyrinogenase</shortName>
        <ecNumber evidence="1">1.3.3.3</ecNumber>
    </recommendedName>
</protein>
<proteinExistence type="inferred from homology"/>
<comment type="function">
    <text evidence="1">Involved in the heme biosynthesis. Catalyzes the aerobic oxidative decarboxylation of propionate groups of rings A and B of coproporphyrinogen-III to yield the vinyl groups in protoporphyrinogen-IX.</text>
</comment>
<comment type="catalytic activity">
    <reaction evidence="1">
        <text>coproporphyrinogen III + O2 + 2 H(+) = protoporphyrinogen IX + 2 CO2 + 2 H2O</text>
        <dbReference type="Rhea" id="RHEA:18257"/>
        <dbReference type="ChEBI" id="CHEBI:15377"/>
        <dbReference type="ChEBI" id="CHEBI:15378"/>
        <dbReference type="ChEBI" id="CHEBI:15379"/>
        <dbReference type="ChEBI" id="CHEBI:16526"/>
        <dbReference type="ChEBI" id="CHEBI:57307"/>
        <dbReference type="ChEBI" id="CHEBI:57309"/>
        <dbReference type="EC" id="1.3.3.3"/>
    </reaction>
</comment>
<comment type="cofactor">
    <cofactor evidence="1">
        <name>a divalent metal cation</name>
        <dbReference type="ChEBI" id="CHEBI:60240"/>
    </cofactor>
</comment>
<comment type="pathway">
    <text evidence="1">Porphyrin-containing compound metabolism; protoporphyrin-IX biosynthesis; protoporphyrinogen-IX from coproporphyrinogen-III (O2 route): step 1/1.</text>
</comment>
<comment type="subunit">
    <text evidence="1">Homodimer.</text>
</comment>
<comment type="subcellular location">
    <subcellularLocation>
        <location evidence="1">Cytoplasm</location>
    </subcellularLocation>
</comment>
<comment type="similarity">
    <text evidence="1">Belongs to the aerobic coproporphyrinogen-III oxidase family.</text>
</comment>
<accession>Q4UJP2</accession>
<feature type="chain" id="PRO_0000277994" description="Oxygen-dependent coproporphyrinogen-III oxidase">
    <location>
        <begin position="1"/>
        <end position="279"/>
    </location>
</feature>
<feature type="region of interest" description="Important for dimerization" evidence="1">
    <location>
        <begin position="244"/>
        <end position="279"/>
    </location>
</feature>
<feature type="active site" description="Proton donor" evidence="1">
    <location>
        <position position="116"/>
    </location>
</feature>
<feature type="binding site" evidence="1">
    <location>
        <position position="102"/>
    </location>
    <ligand>
        <name>substrate</name>
    </ligand>
</feature>
<feature type="binding site" evidence="1">
    <location>
        <position position="106"/>
    </location>
    <ligand>
        <name>a divalent metal cation</name>
        <dbReference type="ChEBI" id="CHEBI:60240"/>
    </ligand>
</feature>
<feature type="binding site" evidence="1">
    <location>
        <position position="116"/>
    </location>
    <ligand>
        <name>a divalent metal cation</name>
        <dbReference type="ChEBI" id="CHEBI:60240"/>
    </ligand>
</feature>
<feature type="binding site" evidence="1">
    <location>
        <begin position="118"/>
        <end position="120"/>
    </location>
    <ligand>
        <name>substrate</name>
    </ligand>
</feature>
<feature type="binding site" evidence="1">
    <location>
        <position position="149"/>
    </location>
    <ligand>
        <name>a divalent metal cation</name>
        <dbReference type="ChEBI" id="CHEBI:60240"/>
    </ligand>
</feature>
<feature type="binding site" evidence="1">
    <location>
        <position position="179"/>
    </location>
    <ligand>
        <name>a divalent metal cation</name>
        <dbReference type="ChEBI" id="CHEBI:60240"/>
    </ligand>
</feature>
<feature type="site" description="Important for dimerization" evidence="1">
    <location>
        <position position="179"/>
    </location>
</feature>
<dbReference type="EC" id="1.3.3.3" evidence="1"/>
<dbReference type="EMBL" id="CP000053">
    <property type="protein sequence ID" value="AAY62247.1"/>
    <property type="molecule type" value="Genomic_DNA"/>
</dbReference>
<dbReference type="SMR" id="Q4UJP2"/>
<dbReference type="STRING" id="315456.RF_1396"/>
<dbReference type="KEGG" id="rfe:RF_1396"/>
<dbReference type="eggNOG" id="COG0408">
    <property type="taxonomic scope" value="Bacteria"/>
</dbReference>
<dbReference type="HOGENOM" id="CLU_026169_0_1_5"/>
<dbReference type="OrthoDB" id="9777553at2"/>
<dbReference type="UniPathway" id="UPA00251">
    <property type="reaction ID" value="UER00322"/>
</dbReference>
<dbReference type="Proteomes" id="UP000008548">
    <property type="component" value="Chromosome"/>
</dbReference>
<dbReference type="GO" id="GO:0005737">
    <property type="term" value="C:cytoplasm"/>
    <property type="evidence" value="ECO:0007669"/>
    <property type="project" value="UniProtKB-SubCell"/>
</dbReference>
<dbReference type="GO" id="GO:0004109">
    <property type="term" value="F:coproporphyrinogen oxidase activity"/>
    <property type="evidence" value="ECO:0007669"/>
    <property type="project" value="UniProtKB-UniRule"/>
</dbReference>
<dbReference type="GO" id="GO:0046872">
    <property type="term" value="F:metal ion binding"/>
    <property type="evidence" value="ECO:0007669"/>
    <property type="project" value="UniProtKB-KW"/>
</dbReference>
<dbReference type="GO" id="GO:0042803">
    <property type="term" value="F:protein homodimerization activity"/>
    <property type="evidence" value="ECO:0000250"/>
    <property type="project" value="UniProtKB"/>
</dbReference>
<dbReference type="GO" id="GO:0006782">
    <property type="term" value="P:protoporphyrinogen IX biosynthetic process"/>
    <property type="evidence" value="ECO:0007669"/>
    <property type="project" value="UniProtKB-UniRule"/>
</dbReference>
<dbReference type="FunFam" id="3.40.1500.10:FF:000005">
    <property type="entry name" value="Oxygen-dependent coproporphyrinogen-III oxidase"/>
    <property type="match status" value="1"/>
</dbReference>
<dbReference type="Gene3D" id="3.40.1500.10">
    <property type="entry name" value="Coproporphyrinogen III oxidase, aerobic"/>
    <property type="match status" value="1"/>
</dbReference>
<dbReference type="HAMAP" id="MF_00333">
    <property type="entry name" value="Coprogen_oxidas"/>
    <property type="match status" value="1"/>
</dbReference>
<dbReference type="InterPro" id="IPR001260">
    <property type="entry name" value="Coprogen_oxidase_aer"/>
</dbReference>
<dbReference type="InterPro" id="IPR036406">
    <property type="entry name" value="Coprogen_oxidase_aer_sf"/>
</dbReference>
<dbReference type="InterPro" id="IPR018375">
    <property type="entry name" value="Coprogen_oxidase_CS"/>
</dbReference>
<dbReference type="NCBIfam" id="NF003727">
    <property type="entry name" value="PRK05330.1"/>
    <property type="match status" value="1"/>
</dbReference>
<dbReference type="PANTHER" id="PTHR10755">
    <property type="entry name" value="COPROPORPHYRINOGEN III OXIDASE, MITOCHONDRIAL"/>
    <property type="match status" value="1"/>
</dbReference>
<dbReference type="PANTHER" id="PTHR10755:SF0">
    <property type="entry name" value="OXYGEN-DEPENDENT COPROPORPHYRINOGEN-III OXIDASE, MITOCHONDRIAL"/>
    <property type="match status" value="1"/>
</dbReference>
<dbReference type="Pfam" id="PF01218">
    <property type="entry name" value="Coprogen_oxidas"/>
    <property type="match status" value="1"/>
</dbReference>
<dbReference type="PIRSF" id="PIRSF000166">
    <property type="entry name" value="Coproporphyri_ox"/>
    <property type="match status" value="1"/>
</dbReference>
<dbReference type="PRINTS" id="PR00073">
    <property type="entry name" value="COPRGNOXDASE"/>
</dbReference>
<dbReference type="SUPFAM" id="SSF102886">
    <property type="entry name" value="Coproporphyrinogen III oxidase"/>
    <property type="match status" value="1"/>
</dbReference>
<dbReference type="PROSITE" id="PS01021">
    <property type="entry name" value="COPROGEN_OXIDASE"/>
    <property type="match status" value="1"/>
</dbReference>
<keyword id="KW-0963">Cytoplasm</keyword>
<keyword id="KW-0350">Heme biosynthesis</keyword>
<keyword id="KW-0479">Metal-binding</keyword>
<keyword id="KW-0560">Oxidoreductase</keyword>
<keyword id="KW-0627">Porphyrin biosynthesis</keyword>
<reference key="1">
    <citation type="journal article" date="2005" name="PLoS Biol.">
        <title>The genome sequence of Rickettsia felis identifies the first putative conjugative plasmid in an obligate intracellular parasite.</title>
        <authorList>
            <person name="Ogata H."/>
            <person name="Renesto P."/>
            <person name="Audic S."/>
            <person name="Robert C."/>
            <person name="Blanc G."/>
            <person name="Fournier P.-E."/>
            <person name="Parinello H."/>
            <person name="Claverie J.-M."/>
            <person name="Raoult D."/>
        </authorList>
    </citation>
    <scope>NUCLEOTIDE SEQUENCE [LARGE SCALE GENOMIC DNA]</scope>
    <source>
        <strain>ATCC VR-1525 / URRWXCal2</strain>
    </source>
</reference>
<organism>
    <name type="scientific">Rickettsia felis (strain ATCC VR-1525 / URRWXCal2)</name>
    <name type="common">Rickettsia azadi</name>
    <dbReference type="NCBI Taxonomy" id="315456"/>
    <lineage>
        <taxon>Bacteria</taxon>
        <taxon>Pseudomonadati</taxon>
        <taxon>Pseudomonadota</taxon>
        <taxon>Alphaproteobacteria</taxon>
        <taxon>Rickettsiales</taxon>
        <taxon>Rickettsiaceae</taxon>
        <taxon>Rickettsieae</taxon>
        <taxon>Rickettsia</taxon>
        <taxon>spotted fever group</taxon>
    </lineage>
</organism>